<keyword id="KW-1185">Reference proteome</keyword>
<keyword id="KW-0687">Ribonucleoprotein</keyword>
<keyword id="KW-0689">Ribosomal protein</keyword>
<keyword id="KW-0694">RNA-binding</keyword>
<keyword id="KW-0699">rRNA-binding</keyword>
<evidence type="ECO:0000255" key="1">
    <source>
        <dbReference type="HAMAP-Rule" id="MF_01302"/>
    </source>
</evidence>
<evidence type="ECO:0000305" key="2"/>
<protein>
    <recommendedName>
        <fullName evidence="1">Small ribosomal subunit protein uS8</fullName>
    </recommendedName>
    <alternativeName>
        <fullName evidence="2">30S ribosomal protein S8</fullName>
    </alternativeName>
</protein>
<name>RS8_ANAMF</name>
<organism>
    <name type="scientific">Anaplasma marginale (strain Florida)</name>
    <dbReference type="NCBI Taxonomy" id="320483"/>
    <lineage>
        <taxon>Bacteria</taxon>
        <taxon>Pseudomonadati</taxon>
        <taxon>Pseudomonadota</taxon>
        <taxon>Alphaproteobacteria</taxon>
        <taxon>Rickettsiales</taxon>
        <taxon>Anaplasmataceae</taxon>
        <taxon>Anaplasma</taxon>
    </lineage>
</organism>
<gene>
    <name evidence="1" type="primary">rpsH</name>
    <name type="ordered locus">AMF_682</name>
</gene>
<sequence length="132" mass="14641">MSLSDPIADFLTRLRNGQAGMNKVVFVPHSKVVRSILDILLAEGYIEGFTEESKSSGIKYLKVCLKYYNCAPVIKKIVRVSRPGKRVYSSADRLPKFYNGLGVYIVSTSQGVMLDYRARKLGIGGEILCGVF</sequence>
<comment type="function">
    <text evidence="1">One of the primary rRNA binding proteins, it binds directly to 16S rRNA central domain where it helps coordinate assembly of the platform of the 30S subunit.</text>
</comment>
<comment type="subunit">
    <text evidence="1">Part of the 30S ribosomal subunit. Contacts proteins S5 and S12.</text>
</comment>
<comment type="similarity">
    <text evidence="1">Belongs to the universal ribosomal protein uS8 family.</text>
</comment>
<proteinExistence type="inferred from homology"/>
<accession>B9KJ56</accession>
<reference key="1">
    <citation type="journal article" date="2009" name="BMC Genomics">
        <title>Conservation in the face of diversity: multistrain analysis of an intracellular bacterium.</title>
        <authorList>
            <person name="Dark M.J."/>
            <person name="Herndon D.R."/>
            <person name="Kappmeyer L.S."/>
            <person name="Gonzales M.P."/>
            <person name="Nordeen E."/>
            <person name="Palmer G.H."/>
            <person name="Knowles D.P. Jr."/>
            <person name="Brayton K.A."/>
        </authorList>
    </citation>
    <scope>NUCLEOTIDE SEQUENCE [LARGE SCALE GENOMIC DNA]</scope>
    <source>
        <strain>Florida</strain>
    </source>
</reference>
<feature type="chain" id="PRO_1000165301" description="Small ribosomal subunit protein uS8">
    <location>
        <begin position="1"/>
        <end position="132"/>
    </location>
</feature>
<dbReference type="EMBL" id="CP001079">
    <property type="protein sequence ID" value="ACM49518.1"/>
    <property type="molecule type" value="Genomic_DNA"/>
</dbReference>
<dbReference type="RefSeq" id="WP_010265262.1">
    <property type="nucleotide sequence ID" value="NZ_AFMS01000137.1"/>
</dbReference>
<dbReference type="SMR" id="B9KJ56"/>
<dbReference type="STRING" id="320483.AMF_682"/>
<dbReference type="GeneID" id="7397864"/>
<dbReference type="KEGG" id="amf:AMF_682"/>
<dbReference type="eggNOG" id="COG0096">
    <property type="taxonomic scope" value="Bacteria"/>
</dbReference>
<dbReference type="HOGENOM" id="CLU_098428_0_0_5"/>
<dbReference type="Proteomes" id="UP000007307">
    <property type="component" value="Chromosome"/>
</dbReference>
<dbReference type="GO" id="GO:1990904">
    <property type="term" value="C:ribonucleoprotein complex"/>
    <property type="evidence" value="ECO:0007669"/>
    <property type="project" value="UniProtKB-KW"/>
</dbReference>
<dbReference type="GO" id="GO:0005840">
    <property type="term" value="C:ribosome"/>
    <property type="evidence" value="ECO:0007669"/>
    <property type="project" value="UniProtKB-KW"/>
</dbReference>
<dbReference type="GO" id="GO:0019843">
    <property type="term" value="F:rRNA binding"/>
    <property type="evidence" value="ECO:0007669"/>
    <property type="project" value="UniProtKB-UniRule"/>
</dbReference>
<dbReference type="GO" id="GO:0003735">
    <property type="term" value="F:structural constituent of ribosome"/>
    <property type="evidence" value="ECO:0007669"/>
    <property type="project" value="InterPro"/>
</dbReference>
<dbReference type="GO" id="GO:0006412">
    <property type="term" value="P:translation"/>
    <property type="evidence" value="ECO:0007669"/>
    <property type="project" value="UniProtKB-UniRule"/>
</dbReference>
<dbReference type="FunFam" id="3.30.1490.10:FF:000001">
    <property type="entry name" value="30S ribosomal protein S8"/>
    <property type="match status" value="1"/>
</dbReference>
<dbReference type="Gene3D" id="3.30.1370.30">
    <property type="match status" value="1"/>
</dbReference>
<dbReference type="Gene3D" id="3.30.1490.10">
    <property type="match status" value="1"/>
</dbReference>
<dbReference type="HAMAP" id="MF_01302_B">
    <property type="entry name" value="Ribosomal_uS8_B"/>
    <property type="match status" value="1"/>
</dbReference>
<dbReference type="InterPro" id="IPR000630">
    <property type="entry name" value="Ribosomal_uS8"/>
</dbReference>
<dbReference type="InterPro" id="IPR047863">
    <property type="entry name" value="Ribosomal_uS8_CS"/>
</dbReference>
<dbReference type="InterPro" id="IPR035987">
    <property type="entry name" value="Ribosomal_uS8_sf"/>
</dbReference>
<dbReference type="NCBIfam" id="NF001109">
    <property type="entry name" value="PRK00136.1"/>
    <property type="match status" value="1"/>
</dbReference>
<dbReference type="PANTHER" id="PTHR11758">
    <property type="entry name" value="40S RIBOSOMAL PROTEIN S15A"/>
    <property type="match status" value="1"/>
</dbReference>
<dbReference type="Pfam" id="PF00410">
    <property type="entry name" value="Ribosomal_S8"/>
    <property type="match status" value="1"/>
</dbReference>
<dbReference type="SUPFAM" id="SSF56047">
    <property type="entry name" value="Ribosomal protein S8"/>
    <property type="match status" value="1"/>
</dbReference>
<dbReference type="PROSITE" id="PS00053">
    <property type="entry name" value="RIBOSOMAL_S8"/>
    <property type="match status" value="1"/>
</dbReference>